<feature type="chain" id="PRO_1000190991" description="Ketol-acid reductoisomerase (NADP(+))">
    <location>
        <begin position="1"/>
        <end position="491"/>
    </location>
</feature>
<feature type="domain" description="KARI N-terminal Rossmann" evidence="2">
    <location>
        <begin position="15"/>
        <end position="208"/>
    </location>
</feature>
<feature type="domain" description="KARI C-terminal knotted 1" evidence="3">
    <location>
        <begin position="209"/>
        <end position="344"/>
    </location>
</feature>
<feature type="domain" description="KARI C-terminal knotted 2" evidence="3">
    <location>
        <begin position="345"/>
        <end position="484"/>
    </location>
</feature>
<feature type="active site" evidence="1">
    <location>
        <position position="132"/>
    </location>
</feature>
<feature type="binding site" evidence="1">
    <location>
        <begin position="45"/>
        <end position="48"/>
    </location>
    <ligand>
        <name>NADP(+)</name>
        <dbReference type="ChEBI" id="CHEBI:58349"/>
    </ligand>
</feature>
<feature type="binding site" evidence="1">
    <location>
        <position position="68"/>
    </location>
    <ligand>
        <name>NADP(+)</name>
        <dbReference type="ChEBI" id="CHEBI:58349"/>
    </ligand>
</feature>
<feature type="binding site" evidence="1">
    <location>
        <position position="76"/>
    </location>
    <ligand>
        <name>NADP(+)</name>
        <dbReference type="ChEBI" id="CHEBI:58349"/>
    </ligand>
</feature>
<feature type="binding site" evidence="1">
    <location>
        <position position="78"/>
    </location>
    <ligand>
        <name>NADP(+)</name>
        <dbReference type="ChEBI" id="CHEBI:58349"/>
    </ligand>
</feature>
<feature type="binding site" evidence="1">
    <location>
        <begin position="108"/>
        <end position="110"/>
    </location>
    <ligand>
        <name>NADP(+)</name>
        <dbReference type="ChEBI" id="CHEBI:58349"/>
    </ligand>
</feature>
<feature type="binding site" evidence="1">
    <location>
        <position position="158"/>
    </location>
    <ligand>
        <name>NADP(+)</name>
        <dbReference type="ChEBI" id="CHEBI:58349"/>
    </ligand>
</feature>
<feature type="binding site" evidence="1">
    <location>
        <position position="217"/>
    </location>
    <ligand>
        <name>Mg(2+)</name>
        <dbReference type="ChEBI" id="CHEBI:18420"/>
        <label>1</label>
    </ligand>
</feature>
<feature type="binding site" evidence="1">
    <location>
        <position position="217"/>
    </location>
    <ligand>
        <name>Mg(2+)</name>
        <dbReference type="ChEBI" id="CHEBI:18420"/>
        <label>2</label>
    </ligand>
</feature>
<feature type="binding site" evidence="1">
    <location>
        <position position="221"/>
    </location>
    <ligand>
        <name>Mg(2+)</name>
        <dbReference type="ChEBI" id="CHEBI:18420"/>
        <label>1</label>
    </ligand>
</feature>
<feature type="binding site" evidence="1">
    <location>
        <position position="389"/>
    </location>
    <ligand>
        <name>Mg(2+)</name>
        <dbReference type="ChEBI" id="CHEBI:18420"/>
        <label>2</label>
    </ligand>
</feature>
<feature type="binding site" evidence="1">
    <location>
        <position position="393"/>
    </location>
    <ligand>
        <name>Mg(2+)</name>
        <dbReference type="ChEBI" id="CHEBI:18420"/>
        <label>2</label>
    </ligand>
</feature>
<feature type="binding site" evidence="1">
    <location>
        <position position="414"/>
    </location>
    <ligand>
        <name>substrate</name>
    </ligand>
</feature>
<protein>
    <recommendedName>
        <fullName evidence="1">Ketol-acid reductoisomerase (NADP(+))</fullName>
        <shortName evidence="1">KARI</shortName>
        <ecNumber evidence="1">1.1.1.86</ecNumber>
    </recommendedName>
    <alternativeName>
        <fullName evidence="1">Acetohydroxy-acid isomeroreductase</fullName>
        <shortName evidence="1">AHIR</shortName>
    </alternativeName>
    <alternativeName>
        <fullName evidence="1">Alpha-keto-beta-hydroxylacyl reductoisomerase</fullName>
    </alternativeName>
    <alternativeName>
        <fullName evidence="1">Ketol-acid reductoisomerase type 2</fullName>
    </alternativeName>
    <alternativeName>
        <fullName evidence="1">Ketol-acid reductoisomerase type II</fullName>
    </alternativeName>
</protein>
<keyword id="KW-0028">Amino-acid biosynthesis</keyword>
<keyword id="KW-0100">Branched-chain amino acid biosynthesis</keyword>
<keyword id="KW-0460">Magnesium</keyword>
<keyword id="KW-0479">Metal-binding</keyword>
<keyword id="KW-0521">NADP</keyword>
<keyword id="KW-0560">Oxidoreductase</keyword>
<keyword id="KW-0677">Repeat</keyword>
<accession>C0Q2V3</accession>
<sequence>MANYFNTLNLRQQLAQLGKCRFMGRDEFADGASYLQGKKVVIVGCGAQGLNQGLNMRDSGLDISYALRKEAIAEKRASWRKATENGFKVGTYEELIPQADLVVNLTPDKQHSDVVRSVQPLMKDGAALGYSHGFNIVEVGEQIRKDITVVMVAPKCPGTEVREEYKRGFGVPTLIAVHPENDPKGEGMAIAKAWAAATGGHRAGVLESSFVAEVKSDLMGEQTILCGMLQAGSLLCFDKLVAEGTDPAYAEKLIQFGWETITEALKQGGITLMMDRLSNPAKLRAYALSEQLKEIMAPLFQKHMDDIISGEFSSGMMADWANDDKKLLTWREETGKTAFETAPQFEGKIGEQEYFDKGVLMIAMVKAGVELAFETMVDSGIIEESAYYESLHELPLIANTIARKRLYEMNVVISDTAEYGNYLFSYACVPLLKPFMAELQPGDLGSAIPEGAVDNAQLRDVNDAIRSHAIEQVGKKLRGYMTDMKRIAVAG</sequence>
<name>ILVC_SALPC</name>
<evidence type="ECO:0000255" key="1">
    <source>
        <dbReference type="HAMAP-Rule" id="MF_00435"/>
    </source>
</evidence>
<evidence type="ECO:0000255" key="2">
    <source>
        <dbReference type="PROSITE-ProRule" id="PRU01197"/>
    </source>
</evidence>
<evidence type="ECO:0000255" key="3">
    <source>
        <dbReference type="PROSITE-ProRule" id="PRU01198"/>
    </source>
</evidence>
<dbReference type="EC" id="1.1.1.86" evidence="1"/>
<dbReference type="EMBL" id="CP000857">
    <property type="protein sequence ID" value="ACN48089.1"/>
    <property type="molecule type" value="Genomic_DNA"/>
</dbReference>
<dbReference type="RefSeq" id="WP_000024943.1">
    <property type="nucleotide sequence ID" value="NC_012125.1"/>
</dbReference>
<dbReference type="SMR" id="C0Q2V3"/>
<dbReference type="KEGG" id="sei:SPC_4022"/>
<dbReference type="HOGENOM" id="CLU_551905_0_0_6"/>
<dbReference type="UniPathway" id="UPA00047">
    <property type="reaction ID" value="UER00056"/>
</dbReference>
<dbReference type="UniPathway" id="UPA00049">
    <property type="reaction ID" value="UER00060"/>
</dbReference>
<dbReference type="Proteomes" id="UP000001599">
    <property type="component" value="Chromosome"/>
</dbReference>
<dbReference type="GO" id="GO:0005829">
    <property type="term" value="C:cytosol"/>
    <property type="evidence" value="ECO:0007669"/>
    <property type="project" value="TreeGrafter"/>
</dbReference>
<dbReference type="GO" id="GO:0004455">
    <property type="term" value="F:ketol-acid reductoisomerase activity"/>
    <property type="evidence" value="ECO:0007669"/>
    <property type="project" value="UniProtKB-UniRule"/>
</dbReference>
<dbReference type="GO" id="GO:0000287">
    <property type="term" value="F:magnesium ion binding"/>
    <property type="evidence" value="ECO:0007669"/>
    <property type="project" value="UniProtKB-UniRule"/>
</dbReference>
<dbReference type="GO" id="GO:0009097">
    <property type="term" value="P:isoleucine biosynthetic process"/>
    <property type="evidence" value="ECO:0007669"/>
    <property type="project" value="UniProtKB-UniRule"/>
</dbReference>
<dbReference type="GO" id="GO:0009099">
    <property type="term" value="P:L-valine biosynthetic process"/>
    <property type="evidence" value="ECO:0007669"/>
    <property type="project" value="UniProtKB-UniRule"/>
</dbReference>
<dbReference type="FunFam" id="1.10.1040.10:FF:000007">
    <property type="entry name" value="Ketol-acid reductoisomerase (NADP(+))"/>
    <property type="match status" value="1"/>
</dbReference>
<dbReference type="FunFam" id="3.40.50.720:FF:000043">
    <property type="entry name" value="Ketol-acid reductoisomerase (NADP(+))"/>
    <property type="match status" value="1"/>
</dbReference>
<dbReference type="Gene3D" id="1.10.1040.10">
    <property type="entry name" value="N-(1-d-carboxylethyl)-l-norvaline Dehydrogenase, domain 2"/>
    <property type="match status" value="1"/>
</dbReference>
<dbReference type="Gene3D" id="3.40.50.720">
    <property type="entry name" value="NAD(P)-binding Rossmann-like Domain"/>
    <property type="match status" value="1"/>
</dbReference>
<dbReference type="HAMAP" id="MF_00435">
    <property type="entry name" value="IlvC"/>
    <property type="match status" value="1"/>
</dbReference>
<dbReference type="InterPro" id="IPR008927">
    <property type="entry name" value="6-PGluconate_DH-like_C_sf"/>
</dbReference>
<dbReference type="InterPro" id="IPR013328">
    <property type="entry name" value="6PGD_dom2"/>
</dbReference>
<dbReference type="InterPro" id="IPR013023">
    <property type="entry name" value="KARI"/>
</dbReference>
<dbReference type="InterPro" id="IPR000506">
    <property type="entry name" value="KARI_C"/>
</dbReference>
<dbReference type="InterPro" id="IPR013116">
    <property type="entry name" value="KARI_N"/>
</dbReference>
<dbReference type="InterPro" id="IPR036291">
    <property type="entry name" value="NAD(P)-bd_dom_sf"/>
</dbReference>
<dbReference type="NCBIfam" id="TIGR00465">
    <property type="entry name" value="ilvC"/>
    <property type="match status" value="1"/>
</dbReference>
<dbReference type="NCBIfam" id="NF003557">
    <property type="entry name" value="PRK05225.1"/>
    <property type="match status" value="1"/>
</dbReference>
<dbReference type="PANTHER" id="PTHR21371">
    <property type="entry name" value="KETOL-ACID REDUCTOISOMERASE, MITOCHONDRIAL"/>
    <property type="match status" value="1"/>
</dbReference>
<dbReference type="PANTHER" id="PTHR21371:SF1">
    <property type="entry name" value="KETOL-ACID REDUCTOISOMERASE, MITOCHONDRIAL"/>
    <property type="match status" value="1"/>
</dbReference>
<dbReference type="Pfam" id="PF01450">
    <property type="entry name" value="KARI_C"/>
    <property type="match status" value="2"/>
</dbReference>
<dbReference type="Pfam" id="PF07991">
    <property type="entry name" value="KARI_N"/>
    <property type="match status" value="1"/>
</dbReference>
<dbReference type="SUPFAM" id="SSF48179">
    <property type="entry name" value="6-phosphogluconate dehydrogenase C-terminal domain-like"/>
    <property type="match status" value="2"/>
</dbReference>
<dbReference type="SUPFAM" id="SSF51735">
    <property type="entry name" value="NAD(P)-binding Rossmann-fold domains"/>
    <property type="match status" value="1"/>
</dbReference>
<dbReference type="PROSITE" id="PS51851">
    <property type="entry name" value="KARI_C"/>
    <property type="match status" value="2"/>
</dbReference>
<dbReference type="PROSITE" id="PS51850">
    <property type="entry name" value="KARI_N"/>
    <property type="match status" value="1"/>
</dbReference>
<organism>
    <name type="scientific">Salmonella paratyphi C (strain RKS4594)</name>
    <dbReference type="NCBI Taxonomy" id="476213"/>
    <lineage>
        <taxon>Bacteria</taxon>
        <taxon>Pseudomonadati</taxon>
        <taxon>Pseudomonadota</taxon>
        <taxon>Gammaproteobacteria</taxon>
        <taxon>Enterobacterales</taxon>
        <taxon>Enterobacteriaceae</taxon>
        <taxon>Salmonella</taxon>
    </lineage>
</organism>
<reference key="1">
    <citation type="journal article" date="2009" name="PLoS ONE">
        <title>Salmonella paratyphi C: genetic divergence from Salmonella choleraesuis and pathogenic convergence with Salmonella typhi.</title>
        <authorList>
            <person name="Liu W.-Q."/>
            <person name="Feng Y."/>
            <person name="Wang Y."/>
            <person name="Zou Q.-H."/>
            <person name="Chen F."/>
            <person name="Guo J.-T."/>
            <person name="Peng Y.-H."/>
            <person name="Jin Y."/>
            <person name="Li Y.-G."/>
            <person name="Hu S.-N."/>
            <person name="Johnston R.N."/>
            <person name="Liu G.-R."/>
            <person name="Liu S.-L."/>
        </authorList>
    </citation>
    <scope>NUCLEOTIDE SEQUENCE [LARGE SCALE GENOMIC DNA]</scope>
    <source>
        <strain>RKS4594</strain>
    </source>
</reference>
<gene>
    <name evidence="1" type="primary">ilvC</name>
    <name type="ordered locus">SPC_4022</name>
</gene>
<proteinExistence type="inferred from homology"/>
<comment type="function">
    <text evidence="1">Involved in the biosynthesis of branched-chain amino acids (BCAA). Catalyzes an alkyl-migration followed by a ketol-acid reduction of (S)-2-acetolactate (S2AL) to yield (R)-2,3-dihydroxy-isovalerate. In the isomerase reaction, S2AL is rearranged via a Mg-dependent methyl migration to produce 3-hydroxy-3-methyl-2-ketobutyrate (HMKB). In the reductase reaction, this 2-ketoacid undergoes a metal-dependent reduction by NADPH to yield (R)-2,3-dihydroxy-isovalerate.</text>
</comment>
<comment type="catalytic activity">
    <reaction evidence="1">
        <text>(2R)-2,3-dihydroxy-3-methylbutanoate + NADP(+) = (2S)-2-acetolactate + NADPH + H(+)</text>
        <dbReference type="Rhea" id="RHEA:22068"/>
        <dbReference type="ChEBI" id="CHEBI:15378"/>
        <dbReference type="ChEBI" id="CHEBI:49072"/>
        <dbReference type="ChEBI" id="CHEBI:57783"/>
        <dbReference type="ChEBI" id="CHEBI:58349"/>
        <dbReference type="ChEBI" id="CHEBI:58476"/>
        <dbReference type="EC" id="1.1.1.86"/>
    </reaction>
</comment>
<comment type="catalytic activity">
    <reaction evidence="1">
        <text>(2R,3R)-2,3-dihydroxy-3-methylpentanoate + NADP(+) = (S)-2-ethyl-2-hydroxy-3-oxobutanoate + NADPH + H(+)</text>
        <dbReference type="Rhea" id="RHEA:13493"/>
        <dbReference type="ChEBI" id="CHEBI:15378"/>
        <dbReference type="ChEBI" id="CHEBI:49256"/>
        <dbReference type="ChEBI" id="CHEBI:49258"/>
        <dbReference type="ChEBI" id="CHEBI:57783"/>
        <dbReference type="ChEBI" id="CHEBI:58349"/>
        <dbReference type="EC" id="1.1.1.86"/>
    </reaction>
</comment>
<comment type="cofactor">
    <cofactor evidence="1">
        <name>Mg(2+)</name>
        <dbReference type="ChEBI" id="CHEBI:18420"/>
    </cofactor>
    <text evidence="1">Binds 2 magnesium ions per subunit.</text>
</comment>
<comment type="pathway">
    <text evidence="1">Amino-acid biosynthesis; L-isoleucine biosynthesis; L-isoleucine from 2-oxobutanoate: step 2/4.</text>
</comment>
<comment type="pathway">
    <text evidence="1">Amino-acid biosynthesis; L-valine biosynthesis; L-valine from pyruvate: step 2/4.</text>
</comment>
<comment type="similarity">
    <text evidence="1">Belongs to the ketol-acid reductoisomerase family.</text>
</comment>